<keyword id="KW-0687">Ribonucleoprotein</keyword>
<keyword id="KW-0689">Ribosomal protein</keyword>
<comment type="similarity">
    <text evidence="1">Belongs to the eukaryotic ribosomal protein eS1 family.</text>
</comment>
<accession>Q46AN4</accession>
<gene>
    <name evidence="1" type="primary">rps3ae</name>
    <name type="ordered locus">Mbar_A2127</name>
</gene>
<sequence length="207" mass="23125">MARKKVQRKLDGWKSKEWYNIEAPAYLNRAIVGNTMAGDPSLLVGRNIETTVGELTNDMTKNNTKVILRINNVVGDVATTDLMGHELTTDYIRSIVKRQTSRIDANIDVKTKDGYIIRVKPTCFTIKRARSSQIKAIREMMVNIVAKRASEADFETFMQEAILGRLSAAIYRQAKFIYPLRRVEIRKTQVEAAPAPAASAAPEPAAA</sequence>
<reference key="1">
    <citation type="journal article" date="2006" name="J. Bacteriol.">
        <title>The Methanosarcina barkeri genome: comparative analysis with Methanosarcina acetivorans and Methanosarcina mazei reveals extensive rearrangement within methanosarcinal genomes.</title>
        <authorList>
            <person name="Maeder D.L."/>
            <person name="Anderson I."/>
            <person name="Brettin T.S."/>
            <person name="Bruce D.C."/>
            <person name="Gilna P."/>
            <person name="Han C.S."/>
            <person name="Lapidus A."/>
            <person name="Metcalf W.W."/>
            <person name="Saunders E."/>
            <person name="Tapia R."/>
            <person name="Sowers K.R."/>
        </authorList>
    </citation>
    <scope>NUCLEOTIDE SEQUENCE [LARGE SCALE GENOMIC DNA]</scope>
    <source>
        <strain>Fusaro / DSM 804</strain>
    </source>
</reference>
<proteinExistence type="inferred from homology"/>
<organism>
    <name type="scientific">Methanosarcina barkeri (strain Fusaro / DSM 804)</name>
    <dbReference type="NCBI Taxonomy" id="269797"/>
    <lineage>
        <taxon>Archaea</taxon>
        <taxon>Methanobacteriati</taxon>
        <taxon>Methanobacteriota</taxon>
        <taxon>Stenosarchaea group</taxon>
        <taxon>Methanomicrobia</taxon>
        <taxon>Methanosarcinales</taxon>
        <taxon>Methanosarcinaceae</taxon>
        <taxon>Methanosarcina</taxon>
    </lineage>
</organism>
<evidence type="ECO:0000255" key="1">
    <source>
        <dbReference type="HAMAP-Rule" id="MF_00359"/>
    </source>
</evidence>
<evidence type="ECO:0000305" key="2"/>
<dbReference type="EMBL" id="CP000099">
    <property type="protein sequence ID" value="AAZ71058.1"/>
    <property type="molecule type" value="Genomic_DNA"/>
</dbReference>
<dbReference type="SMR" id="Q46AN4"/>
<dbReference type="STRING" id="269797.Mbar_A2127"/>
<dbReference type="PaxDb" id="269797-Mbar_A2127"/>
<dbReference type="KEGG" id="mba:Mbar_A2127"/>
<dbReference type="eggNOG" id="arCOG04186">
    <property type="taxonomic scope" value="Archaea"/>
</dbReference>
<dbReference type="HOGENOM" id="CLU_062507_1_0_2"/>
<dbReference type="OrthoDB" id="30639at2157"/>
<dbReference type="GO" id="GO:1990904">
    <property type="term" value="C:ribonucleoprotein complex"/>
    <property type="evidence" value="ECO:0007669"/>
    <property type="project" value="UniProtKB-KW"/>
</dbReference>
<dbReference type="GO" id="GO:0005840">
    <property type="term" value="C:ribosome"/>
    <property type="evidence" value="ECO:0007669"/>
    <property type="project" value="UniProtKB-KW"/>
</dbReference>
<dbReference type="GO" id="GO:0003735">
    <property type="term" value="F:structural constituent of ribosome"/>
    <property type="evidence" value="ECO:0007669"/>
    <property type="project" value="InterPro"/>
</dbReference>
<dbReference type="GO" id="GO:0006412">
    <property type="term" value="P:translation"/>
    <property type="evidence" value="ECO:0007669"/>
    <property type="project" value="UniProtKB-UniRule"/>
</dbReference>
<dbReference type="HAMAP" id="MF_00359">
    <property type="entry name" value="Ribosomal_eS1"/>
    <property type="match status" value="1"/>
</dbReference>
<dbReference type="InterPro" id="IPR001593">
    <property type="entry name" value="Ribosomal_eS1"/>
</dbReference>
<dbReference type="InterPro" id="IPR030838">
    <property type="entry name" value="Ribosomal_eS1_arc"/>
</dbReference>
<dbReference type="InterPro" id="IPR018281">
    <property type="entry name" value="Ribosomal_eS1_CS"/>
</dbReference>
<dbReference type="NCBIfam" id="NF003142">
    <property type="entry name" value="PRK04057.1"/>
    <property type="match status" value="1"/>
</dbReference>
<dbReference type="PANTHER" id="PTHR11830">
    <property type="entry name" value="40S RIBOSOMAL PROTEIN S3A"/>
    <property type="match status" value="1"/>
</dbReference>
<dbReference type="Pfam" id="PF01015">
    <property type="entry name" value="Ribosomal_S3Ae"/>
    <property type="match status" value="1"/>
</dbReference>
<dbReference type="SMART" id="SM01397">
    <property type="entry name" value="Ribosomal_S3Ae"/>
    <property type="match status" value="1"/>
</dbReference>
<dbReference type="PROSITE" id="PS01191">
    <property type="entry name" value="RIBOSOMAL_S3AE"/>
    <property type="match status" value="1"/>
</dbReference>
<name>RS3A_METBF</name>
<protein>
    <recommendedName>
        <fullName evidence="1">Small ribosomal subunit protein eS1</fullName>
    </recommendedName>
    <alternativeName>
        <fullName evidence="2">30S ribosomal protein S3Ae</fullName>
    </alternativeName>
    <alternativeName>
        <fullName evidence="1">Ribosomal protein S1e</fullName>
    </alternativeName>
</protein>
<feature type="chain" id="PRO_1000005191" description="Small ribosomal subunit protein eS1">
    <location>
        <begin position="1"/>
        <end position="207"/>
    </location>
</feature>